<reference key="1">
    <citation type="submission" date="2005-10" db="EMBL/GenBank/DDBJ databases">
        <title>NISC comparative sequencing initiative.</title>
        <authorList>
            <person name="Antonellis A."/>
            <person name="Ayele K."/>
            <person name="Benjamin B."/>
            <person name="Blakesley R.W."/>
            <person name="Boakye A."/>
            <person name="Bouffard G.G."/>
            <person name="Brinkley C."/>
            <person name="Brooks S."/>
            <person name="Chu G."/>
            <person name="Coleman H."/>
            <person name="Engle J."/>
            <person name="Gestole M."/>
            <person name="Greene A."/>
            <person name="Guan X."/>
            <person name="Gupta J."/>
            <person name="Haghighi P."/>
            <person name="Han J."/>
            <person name="Hansen N."/>
            <person name="Ho S.-L."/>
            <person name="Hu P."/>
            <person name="Hunter G."/>
            <person name="Hurle B."/>
            <person name="Idol J.R."/>
            <person name="Kwong P."/>
            <person name="Laric P."/>
            <person name="Larson S."/>
            <person name="Lee-Lin S.-Q."/>
            <person name="Legaspi R."/>
            <person name="Madden M."/>
            <person name="Maduro Q.L."/>
            <person name="Maduro V.B."/>
            <person name="Margulies E.H."/>
            <person name="Masiello C."/>
            <person name="Maskeri B."/>
            <person name="McDowell J."/>
            <person name="Mojidi H.A."/>
            <person name="Mullikin J.C."/>
            <person name="Oestreicher J.S."/>
            <person name="Park M."/>
            <person name="Portnoy M.E."/>
            <person name="Prasad A."/>
            <person name="Puri O."/>
            <person name="Reddix-Dugue N."/>
            <person name="Schandler K."/>
            <person name="Schueler M.G."/>
            <person name="Sison C."/>
            <person name="Stantripop S."/>
            <person name="Stephen E."/>
            <person name="Taye A."/>
            <person name="Thomas J.W."/>
            <person name="Thomas P.J."/>
            <person name="Tsipouri V."/>
            <person name="Ung L."/>
            <person name="Vogt J.L."/>
            <person name="Wetherby K.D."/>
            <person name="Young A."/>
            <person name="Green E.D."/>
        </authorList>
    </citation>
    <scope>NUCLEOTIDE SEQUENCE [LARGE SCALE GENOMIC DNA]</scope>
</reference>
<proteinExistence type="inferred from homology"/>
<name>CDK14_CALJA</name>
<sequence>MSTRNCQGMDSVIKPLDTIPEDKKVRVQRTQSTFDPFEKPTNQVKRVHSENNACINFKTSSTGKESPKVRRHSSPSSPTSPKFGKADSYEKLEKLGEGSYATVYKGKSKVNGKLVALKVIRLQEEEGTPFTAIREASLLKGLKHANIVLLHDIIHTKETLTLVFEYVHTDLCQYMDKHPGGLHPDNVKLFLFQLLRGLSYIHQRYILHRDLKPQNLLISDTGELKLADFGLARAKSVPSHTYSNEVVTLWYRPPDVLLGSTEYSTCLDMWGVGCIFVEMIQGVAAFPGMKDIQDQLERIFLVLGTPNEDTWPGVHSLPHFKPERFTLYSSKNLRQAWNKLSYVNHAEDLASKLLQCSPKNRLSAQAALSHEYFSDLPPRLWELTDMSSIFTVPNVRLQPEAGESMRAFGKNNSYGKSLSNSKH</sequence>
<evidence type="ECO:0000250" key="1"/>
<evidence type="ECO:0000250" key="2">
    <source>
        <dbReference type="UniProtKB" id="O94921"/>
    </source>
</evidence>
<evidence type="ECO:0000255" key="3">
    <source>
        <dbReference type="PROSITE-ProRule" id="PRU00159"/>
    </source>
</evidence>
<evidence type="ECO:0000255" key="4">
    <source>
        <dbReference type="PROSITE-ProRule" id="PRU10027"/>
    </source>
</evidence>
<evidence type="ECO:0000256" key="5">
    <source>
        <dbReference type="SAM" id="MobiDB-lite"/>
    </source>
</evidence>
<evidence type="ECO:0000305" key="6"/>
<comment type="function">
    <text evidence="1">Serine/threonine-protein kinase involved in the control of the eukaryotic cell cycle, whose activity is controlled by an associated cyclin. Acts as a cell-cycle regulator of Wnt signaling pathway during G2/M phase by mediating the phosphorylation of LRP6 at 'Ser-1490', leading to the activation of the Wnt signaling pathway. Acts as a regulator of cell cycle progression and cell proliferation via its interaction with CCDN3. Phosphorylates RB1 in vitro, however the relevance of such result remains to be confirmed in vivo. May also play a role in meiosis, neuron differentiation and may indirectly act as a negative regulator of insulin-responsive glucose transport (By similarity).</text>
</comment>
<comment type="catalytic activity">
    <reaction>
        <text>L-seryl-[protein] + ATP = O-phospho-L-seryl-[protein] + ADP + H(+)</text>
        <dbReference type="Rhea" id="RHEA:17989"/>
        <dbReference type="Rhea" id="RHEA-COMP:9863"/>
        <dbReference type="Rhea" id="RHEA-COMP:11604"/>
        <dbReference type="ChEBI" id="CHEBI:15378"/>
        <dbReference type="ChEBI" id="CHEBI:29999"/>
        <dbReference type="ChEBI" id="CHEBI:30616"/>
        <dbReference type="ChEBI" id="CHEBI:83421"/>
        <dbReference type="ChEBI" id="CHEBI:456216"/>
        <dbReference type="EC" id="2.7.11.22"/>
    </reaction>
</comment>
<comment type="catalytic activity">
    <reaction>
        <text>L-threonyl-[protein] + ATP = O-phospho-L-threonyl-[protein] + ADP + H(+)</text>
        <dbReference type="Rhea" id="RHEA:46608"/>
        <dbReference type="Rhea" id="RHEA-COMP:11060"/>
        <dbReference type="Rhea" id="RHEA-COMP:11605"/>
        <dbReference type="ChEBI" id="CHEBI:15378"/>
        <dbReference type="ChEBI" id="CHEBI:30013"/>
        <dbReference type="ChEBI" id="CHEBI:30616"/>
        <dbReference type="ChEBI" id="CHEBI:61977"/>
        <dbReference type="ChEBI" id="CHEBI:456216"/>
        <dbReference type="EC" id="2.7.11.22"/>
    </reaction>
</comment>
<comment type="activity regulation">
    <text evidence="1">Serine/threonine-protein kinase activity is promoted by associated cyclins CCDN3 and CCNY and repressed by CDKN1A.</text>
</comment>
<comment type="subunit">
    <text evidence="2">Found in a complex with LRP6, CCNY and CAPRIN2 during G2/M stage; CAPRIN2 functions as a scaffold for the complex by binding to CCNY via its N terminus and to CDK14 via its C terminus. Interacts with CCNY; CCNY mediates its recruitment to the plasma membrane and promotes phosphorylation of LRP6. Interacts with CCDN3 and CDKN1A. Interacts with SEPT8. Interacts with 14-3-3 proteina YWHAB, YWHAE, YWHAH and YWHAQ.</text>
</comment>
<comment type="subcellular location">
    <subcellularLocation>
        <location evidence="1">Cell membrane</location>
        <topology evidence="1">Peripheral membrane protein</topology>
    </subcellularLocation>
    <subcellularLocation>
        <location evidence="1">Cytoplasm</location>
    </subcellularLocation>
    <subcellularLocation>
        <location evidence="1">Nucleus</location>
    </subcellularLocation>
    <text evidence="1">Recruited to the cell membrane by CCNY.</text>
</comment>
<comment type="similarity">
    <text evidence="6">Belongs to the protein kinase superfamily. CMGC Ser/Thr protein kinase family. CDC2/CDKX subfamily.</text>
</comment>
<keyword id="KW-0067">ATP-binding</keyword>
<keyword id="KW-0131">Cell cycle</keyword>
<keyword id="KW-0132">Cell division</keyword>
<keyword id="KW-1003">Cell membrane</keyword>
<keyword id="KW-0963">Cytoplasm</keyword>
<keyword id="KW-0418">Kinase</keyword>
<keyword id="KW-0472">Membrane</keyword>
<keyword id="KW-0547">Nucleotide-binding</keyword>
<keyword id="KW-0539">Nucleus</keyword>
<keyword id="KW-0597">Phosphoprotein</keyword>
<keyword id="KW-1185">Reference proteome</keyword>
<keyword id="KW-0723">Serine/threonine-protein kinase</keyword>
<keyword id="KW-0808">Transferase</keyword>
<keyword id="KW-0879">Wnt signaling pathway</keyword>
<gene>
    <name type="primary">CDK14</name>
    <name type="synonym">PFTK1</name>
</gene>
<organism>
    <name type="scientific">Callithrix jacchus</name>
    <name type="common">White-tufted-ear marmoset</name>
    <dbReference type="NCBI Taxonomy" id="9483"/>
    <lineage>
        <taxon>Eukaryota</taxon>
        <taxon>Metazoa</taxon>
        <taxon>Chordata</taxon>
        <taxon>Craniata</taxon>
        <taxon>Vertebrata</taxon>
        <taxon>Euteleostomi</taxon>
        <taxon>Mammalia</taxon>
        <taxon>Eutheria</taxon>
        <taxon>Euarchontoglires</taxon>
        <taxon>Primates</taxon>
        <taxon>Haplorrhini</taxon>
        <taxon>Platyrrhini</taxon>
        <taxon>Cebidae</taxon>
        <taxon>Callitrichinae</taxon>
        <taxon>Callithrix</taxon>
        <taxon>Callithrix</taxon>
    </lineage>
</organism>
<protein>
    <recommendedName>
        <fullName>Cyclin-dependent kinase 14</fullName>
        <ecNumber>2.7.11.22</ecNumber>
    </recommendedName>
    <alternativeName>
        <fullName>Cell division protein kinase 14</fullName>
    </alternativeName>
</protein>
<accession>B0VXE8</accession>
<dbReference type="EC" id="2.7.11.22"/>
<dbReference type="EMBL" id="DP000590">
    <property type="protein sequence ID" value="ABZ80269.1"/>
    <property type="molecule type" value="Genomic_DNA"/>
</dbReference>
<dbReference type="RefSeq" id="XP_009000748.1">
    <property type="nucleotide sequence ID" value="XM_009002500.1"/>
</dbReference>
<dbReference type="RefSeq" id="XP_009000749.1">
    <property type="nucleotide sequence ID" value="XM_009002501.2"/>
</dbReference>
<dbReference type="SMR" id="B0VXE8"/>
<dbReference type="STRING" id="9483.ENSCJAP00000042112"/>
<dbReference type="Ensembl" id="ENSCJAT00000130738.1">
    <property type="protein sequence ID" value="ENSCJAP00000091984.1"/>
    <property type="gene ID" value="ENSCJAG00000014175.5"/>
</dbReference>
<dbReference type="eggNOG" id="KOG0594">
    <property type="taxonomic scope" value="Eukaryota"/>
</dbReference>
<dbReference type="GeneTree" id="ENSGT00940000157640"/>
<dbReference type="InParanoid" id="B0VXE8"/>
<dbReference type="OMA" id="MCDLLDS"/>
<dbReference type="Proteomes" id="UP000008225">
    <property type="component" value="Chromosome 8"/>
</dbReference>
<dbReference type="GO" id="GO:0000308">
    <property type="term" value="C:cytoplasmic cyclin-dependent protein kinase holoenzyme complex"/>
    <property type="evidence" value="ECO:0000250"/>
    <property type="project" value="UniProtKB"/>
</dbReference>
<dbReference type="GO" id="GO:0005829">
    <property type="term" value="C:cytosol"/>
    <property type="evidence" value="ECO:0007669"/>
    <property type="project" value="TreeGrafter"/>
</dbReference>
<dbReference type="GO" id="GO:0005634">
    <property type="term" value="C:nucleus"/>
    <property type="evidence" value="ECO:0007669"/>
    <property type="project" value="UniProtKB-SubCell"/>
</dbReference>
<dbReference type="GO" id="GO:0005886">
    <property type="term" value="C:plasma membrane"/>
    <property type="evidence" value="ECO:0000250"/>
    <property type="project" value="UniProtKB"/>
</dbReference>
<dbReference type="GO" id="GO:0005524">
    <property type="term" value="F:ATP binding"/>
    <property type="evidence" value="ECO:0007669"/>
    <property type="project" value="UniProtKB-KW"/>
</dbReference>
<dbReference type="GO" id="GO:0030332">
    <property type="term" value="F:cyclin binding"/>
    <property type="evidence" value="ECO:0007669"/>
    <property type="project" value="TreeGrafter"/>
</dbReference>
<dbReference type="GO" id="GO:0004693">
    <property type="term" value="F:cyclin-dependent protein serine/threonine kinase activity"/>
    <property type="evidence" value="ECO:0000250"/>
    <property type="project" value="UniProtKB"/>
</dbReference>
<dbReference type="GO" id="GO:0106310">
    <property type="term" value="F:protein serine kinase activity"/>
    <property type="evidence" value="ECO:0007669"/>
    <property type="project" value="RHEA"/>
</dbReference>
<dbReference type="GO" id="GO:0051301">
    <property type="term" value="P:cell division"/>
    <property type="evidence" value="ECO:0007669"/>
    <property type="project" value="UniProtKB-KW"/>
</dbReference>
<dbReference type="GO" id="GO:0000086">
    <property type="term" value="P:G2/M transition of mitotic cell cycle"/>
    <property type="evidence" value="ECO:0000250"/>
    <property type="project" value="UniProtKB"/>
</dbReference>
<dbReference type="GO" id="GO:0060828">
    <property type="term" value="P:regulation of canonical Wnt signaling pathway"/>
    <property type="evidence" value="ECO:0000250"/>
    <property type="project" value="UniProtKB"/>
</dbReference>
<dbReference type="GO" id="GO:0016055">
    <property type="term" value="P:Wnt signaling pathway"/>
    <property type="evidence" value="ECO:0007669"/>
    <property type="project" value="UniProtKB-KW"/>
</dbReference>
<dbReference type="CDD" id="cd07869">
    <property type="entry name" value="STKc_PFTAIRE1"/>
    <property type="match status" value="1"/>
</dbReference>
<dbReference type="FunFam" id="1.10.510.10:FF:000131">
    <property type="entry name" value="cyclin-dependent kinase 14 isoform X1"/>
    <property type="match status" value="1"/>
</dbReference>
<dbReference type="FunFam" id="3.30.200.20:FF:000007">
    <property type="entry name" value="Cyclin-dependent kinase 14, putative"/>
    <property type="match status" value="1"/>
</dbReference>
<dbReference type="Gene3D" id="3.30.200.20">
    <property type="entry name" value="Phosphorylase Kinase, domain 1"/>
    <property type="match status" value="1"/>
</dbReference>
<dbReference type="Gene3D" id="1.10.510.10">
    <property type="entry name" value="Transferase(Phosphotransferase) domain 1"/>
    <property type="match status" value="1"/>
</dbReference>
<dbReference type="InterPro" id="IPR050108">
    <property type="entry name" value="CDK"/>
</dbReference>
<dbReference type="InterPro" id="IPR011009">
    <property type="entry name" value="Kinase-like_dom_sf"/>
</dbReference>
<dbReference type="InterPro" id="IPR000719">
    <property type="entry name" value="Prot_kinase_dom"/>
</dbReference>
<dbReference type="InterPro" id="IPR017441">
    <property type="entry name" value="Protein_kinase_ATP_BS"/>
</dbReference>
<dbReference type="InterPro" id="IPR008271">
    <property type="entry name" value="Ser/Thr_kinase_AS"/>
</dbReference>
<dbReference type="PANTHER" id="PTHR24056">
    <property type="entry name" value="CELL DIVISION PROTEIN KINASE"/>
    <property type="match status" value="1"/>
</dbReference>
<dbReference type="PANTHER" id="PTHR24056:SF154">
    <property type="entry name" value="CYCLIN-DEPENDENT KINASE 14"/>
    <property type="match status" value="1"/>
</dbReference>
<dbReference type="Pfam" id="PF00069">
    <property type="entry name" value="Pkinase"/>
    <property type="match status" value="1"/>
</dbReference>
<dbReference type="SMART" id="SM00220">
    <property type="entry name" value="S_TKc"/>
    <property type="match status" value="1"/>
</dbReference>
<dbReference type="SUPFAM" id="SSF56112">
    <property type="entry name" value="Protein kinase-like (PK-like)"/>
    <property type="match status" value="1"/>
</dbReference>
<dbReference type="PROSITE" id="PS00107">
    <property type="entry name" value="PROTEIN_KINASE_ATP"/>
    <property type="match status" value="1"/>
</dbReference>
<dbReference type="PROSITE" id="PS50011">
    <property type="entry name" value="PROTEIN_KINASE_DOM"/>
    <property type="match status" value="1"/>
</dbReference>
<dbReference type="PROSITE" id="PS00108">
    <property type="entry name" value="PROTEIN_KINASE_ST"/>
    <property type="match status" value="1"/>
</dbReference>
<feature type="chain" id="PRO_0000391899" description="Cyclin-dependent kinase 14">
    <location>
        <begin position="1"/>
        <end position="423"/>
    </location>
</feature>
<feature type="domain" description="Protein kinase" evidence="3">
    <location>
        <begin position="89"/>
        <end position="373"/>
    </location>
</feature>
<feature type="region of interest" description="Disordered" evidence="5">
    <location>
        <begin position="49"/>
        <end position="87"/>
    </location>
</feature>
<feature type="region of interest" description="Disordered" evidence="5">
    <location>
        <begin position="403"/>
        <end position="423"/>
    </location>
</feature>
<feature type="compositionally biased region" description="Polar residues" evidence="5">
    <location>
        <begin position="49"/>
        <end position="64"/>
    </location>
</feature>
<feature type="compositionally biased region" description="Polar residues" evidence="5">
    <location>
        <begin position="410"/>
        <end position="423"/>
    </location>
</feature>
<feature type="active site" description="Proton acceptor" evidence="3 4">
    <location>
        <position position="210"/>
    </location>
</feature>
<feature type="binding site" evidence="3">
    <location>
        <begin position="95"/>
        <end position="103"/>
    </location>
    <ligand>
        <name>ATP</name>
        <dbReference type="ChEBI" id="CHEBI:30616"/>
    </ligand>
</feature>
<feature type="binding site" evidence="3">
    <location>
        <position position="118"/>
    </location>
    <ligand>
        <name>ATP</name>
        <dbReference type="ChEBI" id="CHEBI:30616"/>
    </ligand>
</feature>
<feature type="modified residue" description="Phosphoserine" evidence="2">
    <location>
        <position position="32"/>
    </location>
</feature>
<feature type="modified residue" description="Phosphoserine" evidence="2">
    <location>
        <position position="49"/>
    </location>
</feature>
<feature type="modified residue" description="Phosphoserine" evidence="2">
    <location>
        <position position="88"/>
    </location>
</feature>